<proteinExistence type="inferred from homology"/>
<accession>B9J9Y1</accession>
<evidence type="ECO:0000255" key="1">
    <source>
        <dbReference type="HAMAP-Rule" id="MF_00127"/>
    </source>
</evidence>
<name>SYH_RHIR8</name>
<dbReference type="EC" id="6.1.1.21" evidence="1"/>
<dbReference type="EMBL" id="CP000628">
    <property type="protein sequence ID" value="ACM25599.1"/>
    <property type="molecule type" value="Genomic_DNA"/>
</dbReference>
<dbReference type="RefSeq" id="WP_007699851.1">
    <property type="nucleotide sequence ID" value="NC_011985.1"/>
</dbReference>
<dbReference type="SMR" id="B9J9Y1"/>
<dbReference type="STRING" id="311403.Arad_1055"/>
<dbReference type="GeneID" id="86847417"/>
<dbReference type="KEGG" id="ara:Arad_1055"/>
<dbReference type="eggNOG" id="COG0124">
    <property type="taxonomic scope" value="Bacteria"/>
</dbReference>
<dbReference type="HOGENOM" id="CLU_025113_3_2_5"/>
<dbReference type="Proteomes" id="UP000001600">
    <property type="component" value="Chromosome 1"/>
</dbReference>
<dbReference type="GO" id="GO:0005737">
    <property type="term" value="C:cytoplasm"/>
    <property type="evidence" value="ECO:0007669"/>
    <property type="project" value="UniProtKB-SubCell"/>
</dbReference>
<dbReference type="GO" id="GO:0005524">
    <property type="term" value="F:ATP binding"/>
    <property type="evidence" value="ECO:0007669"/>
    <property type="project" value="UniProtKB-UniRule"/>
</dbReference>
<dbReference type="GO" id="GO:0004821">
    <property type="term" value="F:histidine-tRNA ligase activity"/>
    <property type="evidence" value="ECO:0007669"/>
    <property type="project" value="UniProtKB-UniRule"/>
</dbReference>
<dbReference type="GO" id="GO:0006427">
    <property type="term" value="P:histidyl-tRNA aminoacylation"/>
    <property type="evidence" value="ECO:0007669"/>
    <property type="project" value="UniProtKB-UniRule"/>
</dbReference>
<dbReference type="CDD" id="cd00773">
    <property type="entry name" value="HisRS-like_core"/>
    <property type="match status" value="1"/>
</dbReference>
<dbReference type="CDD" id="cd00859">
    <property type="entry name" value="HisRS_anticodon"/>
    <property type="match status" value="1"/>
</dbReference>
<dbReference type="Gene3D" id="3.40.50.800">
    <property type="entry name" value="Anticodon-binding domain"/>
    <property type="match status" value="1"/>
</dbReference>
<dbReference type="Gene3D" id="3.30.930.10">
    <property type="entry name" value="Bira Bifunctional Protein, Domain 2"/>
    <property type="match status" value="1"/>
</dbReference>
<dbReference type="HAMAP" id="MF_00127">
    <property type="entry name" value="His_tRNA_synth"/>
    <property type="match status" value="1"/>
</dbReference>
<dbReference type="InterPro" id="IPR006195">
    <property type="entry name" value="aa-tRNA-synth_II"/>
</dbReference>
<dbReference type="InterPro" id="IPR045864">
    <property type="entry name" value="aa-tRNA-synth_II/BPL/LPL"/>
</dbReference>
<dbReference type="InterPro" id="IPR004154">
    <property type="entry name" value="Anticodon-bd"/>
</dbReference>
<dbReference type="InterPro" id="IPR036621">
    <property type="entry name" value="Anticodon-bd_dom_sf"/>
</dbReference>
<dbReference type="InterPro" id="IPR015807">
    <property type="entry name" value="His-tRNA-ligase"/>
</dbReference>
<dbReference type="InterPro" id="IPR041715">
    <property type="entry name" value="HisRS-like_core"/>
</dbReference>
<dbReference type="InterPro" id="IPR004516">
    <property type="entry name" value="HisRS/HisZ"/>
</dbReference>
<dbReference type="InterPro" id="IPR033656">
    <property type="entry name" value="HisRS_anticodon"/>
</dbReference>
<dbReference type="NCBIfam" id="TIGR00442">
    <property type="entry name" value="hisS"/>
    <property type="match status" value="1"/>
</dbReference>
<dbReference type="PANTHER" id="PTHR11476:SF7">
    <property type="entry name" value="HISTIDINE--TRNA LIGASE"/>
    <property type="match status" value="1"/>
</dbReference>
<dbReference type="PANTHER" id="PTHR11476">
    <property type="entry name" value="HISTIDYL-TRNA SYNTHETASE"/>
    <property type="match status" value="1"/>
</dbReference>
<dbReference type="Pfam" id="PF03129">
    <property type="entry name" value="HGTP_anticodon"/>
    <property type="match status" value="1"/>
</dbReference>
<dbReference type="Pfam" id="PF13393">
    <property type="entry name" value="tRNA-synt_His"/>
    <property type="match status" value="1"/>
</dbReference>
<dbReference type="PIRSF" id="PIRSF001549">
    <property type="entry name" value="His-tRNA_synth"/>
    <property type="match status" value="1"/>
</dbReference>
<dbReference type="SUPFAM" id="SSF52954">
    <property type="entry name" value="Class II aaRS ABD-related"/>
    <property type="match status" value="1"/>
</dbReference>
<dbReference type="SUPFAM" id="SSF55681">
    <property type="entry name" value="Class II aaRS and biotin synthetases"/>
    <property type="match status" value="1"/>
</dbReference>
<dbReference type="PROSITE" id="PS50862">
    <property type="entry name" value="AA_TRNA_LIGASE_II"/>
    <property type="match status" value="1"/>
</dbReference>
<protein>
    <recommendedName>
        <fullName evidence="1">Histidine--tRNA ligase</fullName>
        <ecNumber evidence="1">6.1.1.21</ecNumber>
    </recommendedName>
    <alternativeName>
        <fullName evidence="1">Histidyl-tRNA synthetase</fullName>
        <shortName evidence="1">HisRS</shortName>
    </alternativeName>
</protein>
<comment type="catalytic activity">
    <reaction evidence="1">
        <text>tRNA(His) + L-histidine + ATP = L-histidyl-tRNA(His) + AMP + diphosphate + H(+)</text>
        <dbReference type="Rhea" id="RHEA:17313"/>
        <dbReference type="Rhea" id="RHEA-COMP:9665"/>
        <dbReference type="Rhea" id="RHEA-COMP:9689"/>
        <dbReference type="ChEBI" id="CHEBI:15378"/>
        <dbReference type="ChEBI" id="CHEBI:30616"/>
        <dbReference type="ChEBI" id="CHEBI:33019"/>
        <dbReference type="ChEBI" id="CHEBI:57595"/>
        <dbReference type="ChEBI" id="CHEBI:78442"/>
        <dbReference type="ChEBI" id="CHEBI:78527"/>
        <dbReference type="ChEBI" id="CHEBI:456215"/>
        <dbReference type="EC" id="6.1.1.21"/>
    </reaction>
</comment>
<comment type="subunit">
    <text evidence="1">Homodimer.</text>
</comment>
<comment type="subcellular location">
    <subcellularLocation>
        <location evidence="1">Cytoplasm</location>
    </subcellularLocation>
</comment>
<comment type="similarity">
    <text evidence="1">Belongs to the class-II aminoacyl-tRNA synthetase family.</text>
</comment>
<feature type="chain" id="PRO_1000199108" description="Histidine--tRNA ligase">
    <location>
        <begin position="1"/>
        <end position="504"/>
    </location>
</feature>
<organism>
    <name type="scientific">Rhizobium rhizogenes (strain K84 / ATCC BAA-868)</name>
    <name type="common">Agrobacterium radiobacter</name>
    <dbReference type="NCBI Taxonomy" id="311403"/>
    <lineage>
        <taxon>Bacteria</taxon>
        <taxon>Pseudomonadati</taxon>
        <taxon>Pseudomonadota</taxon>
        <taxon>Alphaproteobacteria</taxon>
        <taxon>Hyphomicrobiales</taxon>
        <taxon>Rhizobiaceae</taxon>
        <taxon>Rhizobium/Agrobacterium group</taxon>
        <taxon>Rhizobium</taxon>
    </lineage>
</organism>
<keyword id="KW-0030">Aminoacyl-tRNA synthetase</keyword>
<keyword id="KW-0067">ATP-binding</keyword>
<keyword id="KW-0963">Cytoplasm</keyword>
<keyword id="KW-0436">Ligase</keyword>
<keyword id="KW-0547">Nucleotide-binding</keyword>
<keyword id="KW-0648">Protein biosynthesis</keyword>
<reference key="1">
    <citation type="journal article" date="2009" name="J. Bacteriol.">
        <title>Genome sequences of three Agrobacterium biovars help elucidate the evolution of multichromosome genomes in bacteria.</title>
        <authorList>
            <person name="Slater S.C."/>
            <person name="Goldman B.S."/>
            <person name="Goodner B."/>
            <person name="Setubal J.C."/>
            <person name="Farrand S.K."/>
            <person name="Nester E.W."/>
            <person name="Burr T.J."/>
            <person name="Banta L."/>
            <person name="Dickerman A.W."/>
            <person name="Paulsen I."/>
            <person name="Otten L."/>
            <person name="Suen G."/>
            <person name="Welch R."/>
            <person name="Almeida N.F."/>
            <person name="Arnold F."/>
            <person name="Burton O.T."/>
            <person name="Du Z."/>
            <person name="Ewing A."/>
            <person name="Godsy E."/>
            <person name="Heisel S."/>
            <person name="Houmiel K.L."/>
            <person name="Jhaveri J."/>
            <person name="Lu J."/>
            <person name="Miller N.M."/>
            <person name="Norton S."/>
            <person name="Chen Q."/>
            <person name="Phoolcharoen W."/>
            <person name="Ohlin V."/>
            <person name="Ondrusek D."/>
            <person name="Pride N."/>
            <person name="Stricklin S.L."/>
            <person name="Sun J."/>
            <person name="Wheeler C."/>
            <person name="Wilson L."/>
            <person name="Zhu H."/>
            <person name="Wood D.W."/>
        </authorList>
    </citation>
    <scope>NUCLEOTIDE SEQUENCE [LARGE SCALE GENOMIC DNA]</scope>
    <source>
        <strain>K84 / ATCC BAA-868</strain>
    </source>
</reference>
<gene>
    <name evidence="1" type="primary">hisS</name>
    <name type="ordered locus">Arad_1055</name>
</gene>
<sequence length="504" mass="55401">MSDKQKKPQKLKARLPRGFVDRSASDIRAVNEMTAKIRAVYEHYGFDPMETPLLEYTDALGKFLPDSDRPNEGVFSLQDDDEQWMSLRYDLTAPLARHVAENFNEIQLPYRTYRAGYVFRNEKPGPGRFRQFMQFDADTIGAPGVQADAEMCMMMADTLEALGIKRGDYLIRVNNRKVLDGVLEAIGLGGDDKAGQRLNVLRAIDKLDKFGPEGVALLLGPGRKDESGDFTKGAGLNAEQIDKVLFFVGIKDYAESAAQLAELVAGTSKGGEGVEELNFIGSLVTSAGYQSDRIKIDPSVVRGLEYYTGPVYEAELTFDVTNEKGEKVVFGSVAGGGRYDGLVSRFMGQPVPATGFAIGVSRLMTALKNLGKLGQDEVIAPVLVTVMDGDVEAMGRYQRFTQQLRAAGIRAEMFQGNWKKFGNQLKYADRRGCPIAIIQGGDERAEGVVQLKDLIEGKRLSGEIEDNASWREARVAQETVPEADLVAKVQAILAAQAEDRKRAE</sequence>